<name>GAG_FIVSD</name>
<comment type="function">
    <text evidence="1">Matrix protein p15 forms the outer shell of the core of the virus, lining the inner surface of the viral membrane.</text>
</comment>
<comment type="function">
    <text evidence="1">Capsid protein p24 forms the conical core of the virus that encapsulates the genomic RNA-nucleocapsid complex.</text>
</comment>
<comment type="function">
    <text evidence="1">Nucleocapsid protein p13 encapsulates and protects viral dimeric unspliced (genomic) RNA. Binds these RNAs through its zinc fingers (By similarity).</text>
</comment>
<comment type="subcellular location">
    <molecule>Matrix protein p15</molecule>
    <subcellularLocation>
        <location evidence="5">Virion</location>
    </subcellularLocation>
</comment>
<comment type="subcellular location">
    <molecule>Capsid protein p24</molecule>
    <subcellularLocation>
        <location evidence="5">Virion</location>
    </subcellularLocation>
</comment>
<comment type="subcellular location">
    <molecule>Nucleocapsid protein p13</molecule>
    <subcellularLocation>
        <location evidence="5">Virion</location>
    </subcellularLocation>
</comment>
<comment type="domain">
    <text evidence="1">Late-budding domains (L domains) are short sequence motifs essential for viral particle budding. They recruit proteins of the host ESCRT machinery (Endosomal Sorting Complex Required for Transport) or ESCRT-associated proteins. Nucleocapsid protein p13 contains one L domain: a PTAP/PSAP motif, which interacts with the UEV domain of TSG101 (By similarity).</text>
</comment>
<comment type="similarity">
    <text evidence="5">Belongs to the feline lentivirus group gag polyprotein family.</text>
</comment>
<organism>
    <name type="scientific">Feline immunodeficiency virus (strain San Diego)</name>
    <name type="common">FIV</name>
    <dbReference type="NCBI Taxonomy" id="11675"/>
    <lineage>
        <taxon>Viruses</taxon>
        <taxon>Riboviria</taxon>
        <taxon>Pararnavirae</taxon>
        <taxon>Artverviricota</taxon>
        <taxon>Revtraviricetes</taxon>
        <taxon>Ortervirales</taxon>
        <taxon>Retroviridae</taxon>
        <taxon>Orthoretrovirinae</taxon>
        <taxon>Lentivirus</taxon>
        <taxon>Feline immunodeficiency virus</taxon>
    </lineage>
</organism>
<sequence length="450" mass="49134">MGNGQGRDWKMAIKRCSNVAVGVGGKSKKFGEGNFRWAIRMANVSTGREPGDIPETLDQLRLVICDLQERREKFGSSKEIDMAITTLKVFAVVGLLNMTVSTAAAAENMYTQMGLDTRPSTKEAGGKEEGPPQAYPIQTVNGAPQYVALDPKMVSIFMEKAREGLGGEEVQLWFTAFSANLTPTDMATLIMAAPGCAADKEILDESLKQLTAEYDRTNPPDGPRPLPYFTAAEIMGIGLTQEQQAEARFAPARMQCRAWYLEALGKLAAIKAKSPRAVQLRQGAKEDYSSFIDRLFAQIDQEQNTAEVKLYLKQSLSIANANAECKKAMSHLKPESTLEEKLRACQEIGSPGYKMQLLAEALTKVQVVQSKGSGPVCFNCKKPGHLARQCRDVKKCNKCGKPGHLAAKCWQGGKRNSGNWKAGRAAAPVNQVQQTVMPSAPPMEEKLLDL</sequence>
<keyword id="KW-0167">Capsid protein</keyword>
<keyword id="KW-0945">Host-virus interaction</keyword>
<keyword id="KW-0479">Metal-binding</keyword>
<keyword id="KW-0677">Repeat</keyword>
<keyword id="KW-1198">Viral budding</keyword>
<keyword id="KW-1187">Viral budding via the host ESCRT complexes</keyword>
<keyword id="KW-0468">Viral matrix protein</keyword>
<keyword id="KW-0543">Viral nucleoprotein</keyword>
<keyword id="KW-1188">Viral release from host cell</keyword>
<keyword id="KW-0946">Virion</keyword>
<keyword id="KW-0917">Virion maturation</keyword>
<keyword id="KW-0862">Zinc</keyword>
<keyword id="KW-0863">Zinc-finger</keyword>
<gene>
    <name type="primary">gag</name>
</gene>
<reference key="1">
    <citation type="journal article" date="1990" name="J. Virol.">
        <title>Comparison of two host cell range variants of feline immunodeficiency virus.</title>
        <authorList>
            <person name="Phillips T.R."/>
            <person name="Talbott R.L."/>
            <person name="Lamont C."/>
            <person name="Muir S."/>
            <person name="Lovelace K.M."/>
            <person name="Elder J.H."/>
        </authorList>
    </citation>
    <scope>NUCLEOTIDE SEQUENCE [GENOMIC RNA]</scope>
    <source>
        <strain>Isolate PPR</strain>
    </source>
</reference>
<proteinExistence type="inferred from homology"/>
<protein>
    <recommendedName>
        <fullName>Gag polyprotein</fullName>
    </recommendedName>
    <component>
        <recommendedName>
            <fullName>Matrix protein p15</fullName>
            <shortName>MA</shortName>
        </recommendedName>
    </component>
    <component>
        <recommendedName>
            <fullName>Capsid protein p24</fullName>
            <shortName>CA</shortName>
        </recommendedName>
    </component>
    <component>
        <recommendedName>
            <fullName>p1</fullName>
        </recommendedName>
    </component>
    <component>
        <recommendedName>
            <fullName>Nucleocapsid protein p13</fullName>
            <shortName>NC</shortName>
        </recommendedName>
    </component>
</protein>
<evidence type="ECO:0000250" key="1"/>
<evidence type="ECO:0000255" key="2"/>
<evidence type="ECO:0000255" key="3">
    <source>
        <dbReference type="PROSITE-ProRule" id="PRU00047"/>
    </source>
</evidence>
<evidence type="ECO:0000256" key="4">
    <source>
        <dbReference type="SAM" id="MobiDB-lite"/>
    </source>
</evidence>
<evidence type="ECO:0000305" key="5"/>
<accession>P19027</accession>
<feature type="chain" id="PRO_0000038787" description="Matrix protein p15">
    <location>
        <begin position="1"/>
        <end position="135"/>
    </location>
</feature>
<feature type="chain" id="PRO_0000038788" description="Capsid protein p24">
    <location>
        <begin position="136"/>
        <end position="357"/>
    </location>
</feature>
<feature type="peptide" id="PRO_0000272323" description="p1" evidence="2">
    <location>
        <begin position="358"/>
        <end position="366"/>
    </location>
</feature>
<feature type="chain" id="PRO_0000038789" description="Nucleocapsid protein p13">
    <location>
        <begin position="367"/>
        <end position="450"/>
    </location>
</feature>
<feature type="zinc finger region" description="CCHC-type 1" evidence="3">
    <location>
        <begin position="375"/>
        <end position="392"/>
    </location>
</feature>
<feature type="zinc finger region" description="CCHC-type 2" evidence="3">
    <location>
        <begin position="394"/>
        <end position="411"/>
    </location>
</feature>
<feature type="region of interest" description="Disordered" evidence="4">
    <location>
        <begin position="116"/>
        <end position="137"/>
    </location>
</feature>
<feature type="short sequence motif" description="PTAP/PSAP motif">
    <location>
        <begin position="438"/>
        <end position="441"/>
    </location>
</feature>
<feature type="compositionally biased region" description="Basic and acidic residues" evidence="4">
    <location>
        <begin position="119"/>
        <end position="130"/>
    </location>
</feature>
<dbReference type="EMBL" id="M36968">
    <property type="protein sequence ID" value="AAA43075.1"/>
    <property type="molecule type" value="Genomic_RNA"/>
</dbReference>
<dbReference type="SMR" id="P19027"/>
<dbReference type="GO" id="GO:0019013">
    <property type="term" value="C:viral nucleocapsid"/>
    <property type="evidence" value="ECO:0007669"/>
    <property type="project" value="UniProtKB-KW"/>
</dbReference>
<dbReference type="GO" id="GO:0003676">
    <property type="term" value="F:nucleic acid binding"/>
    <property type="evidence" value="ECO:0007669"/>
    <property type="project" value="InterPro"/>
</dbReference>
<dbReference type="GO" id="GO:0039660">
    <property type="term" value="F:structural constituent of virion"/>
    <property type="evidence" value="ECO:0007669"/>
    <property type="project" value="UniProtKB-KW"/>
</dbReference>
<dbReference type="GO" id="GO:0008270">
    <property type="term" value="F:zinc ion binding"/>
    <property type="evidence" value="ECO:0007669"/>
    <property type="project" value="UniProtKB-KW"/>
</dbReference>
<dbReference type="GO" id="GO:0039702">
    <property type="term" value="P:viral budding via host ESCRT complex"/>
    <property type="evidence" value="ECO:0007669"/>
    <property type="project" value="UniProtKB-KW"/>
</dbReference>
<dbReference type="Gene3D" id="1.10.1200.30">
    <property type="match status" value="1"/>
</dbReference>
<dbReference type="Gene3D" id="1.10.375.10">
    <property type="entry name" value="Human Immunodeficiency Virus Type 1 Capsid Protein"/>
    <property type="match status" value="1"/>
</dbReference>
<dbReference type="Gene3D" id="1.10.150.90">
    <property type="entry name" value="Immunodeficiency lentiviruses, gag gene matrix protein p17"/>
    <property type="match status" value="1"/>
</dbReference>
<dbReference type="Gene3D" id="4.10.60.10">
    <property type="entry name" value="Zinc finger, CCHC-type"/>
    <property type="match status" value="1"/>
</dbReference>
<dbReference type="InterPro" id="IPR045345">
    <property type="entry name" value="Gag_p24_C"/>
</dbReference>
<dbReference type="InterPro" id="IPR012344">
    <property type="entry name" value="Matrix_HIV/RSV_N"/>
</dbReference>
<dbReference type="InterPro" id="IPR050195">
    <property type="entry name" value="Primate_lentivir_Gag_pol-like"/>
</dbReference>
<dbReference type="InterPro" id="IPR008916">
    <property type="entry name" value="Retrov_capsid_C"/>
</dbReference>
<dbReference type="InterPro" id="IPR008919">
    <property type="entry name" value="Retrov_capsid_N"/>
</dbReference>
<dbReference type="InterPro" id="IPR001878">
    <property type="entry name" value="Znf_CCHC"/>
</dbReference>
<dbReference type="InterPro" id="IPR036875">
    <property type="entry name" value="Znf_CCHC_sf"/>
</dbReference>
<dbReference type="PANTHER" id="PTHR40389:SF4">
    <property type="match status" value="1"/>
</dbReference>
<dbReference type="PANTHER" id="PTHR40389">
    <property type="entry name" value="ENDOGENOUS RETROVIRUS GROUP K MEMBER 24 GAG POLYPROTEIN-RELATED"/>
    <property type="match status" value="1"/>
</dbReference>
<dbReference type="Pfam" id="PF19317">
    <property type="entry name" value="Gag_p24_C"/>
    <property type="match status" value="1"/>
</dbReference>
<dbReference type="Pfam" id="PF00098">
    <property type="entry name" value="zf-CCHC"/>
    <property type="match status" value="2"/>
</dbReference>
<dbReference type="SMART" id="SM00343">
    <property type="entry name" value="ZnF_C2HC"/>
    <property type="match status" value="2"/>
</dbReference>
<dbReference type="SUPFAM" id="SSF47353">
    <property type="entry name" value="Retrovirus capsid dimerization domain-like"/>
    <property type="match status" value="1"/>
</dbReference>
<dbReference type="SUPFAM" id="SSF47943">
    <property type="entry name" value="Retrovirus capsid protein, N-terminal core domain"/>
    <property type="match status" value="1"/>
</dbReference>
<dbReference type="SUPFAM" id="SSF57756">
    <property type="entry name" value="Retrovirus zinc finger-like domains"/>
    <property type="match status" value="1"/>
</dbReference>
<dbReference type="PROSITE" id="PS50158">
    <property type="entry name" value="ZF_CCHC"/>
    <property type="match status" value="2"/>
</dbReference>
<organismHost>
    <name type="scientific">Felidae</name>
    <name type="common">cat family</name>
    <dbReference type="NCBI Taxonomy" id="9681"/>
</organismHost>